<accession>P11622</accession>
<dbReference type="EC" id="3.4.21.-"/>
<dbReference type="EMBL" id="Y07496">
    <property type="protein sequence ID" value="CAA68795.1"/>
    <property type="molecule type" value="Genomic_RNA"/>
</dbReference>
<dbReference type="PIR" id="S03547">
    <property type="entry name" value="S03547"/>
</dbReference>
<dbReference type="MEROPS" id="S39.002"/>
<dbReference type="Proteomes" id="UP000000474">
    <property type="component" value="Genome"/>
</dbReference>
<dbReference type="GO" id="GO:0016020">
    <property type="term" value="C:membrane"/>
    <property type="evidence" value="ECO:0007669"/>
    <property type="project" value="UniProtKB-SubCell"/>
</dbReference>
<dbReference type="GO" id="GO:0003723">
    <property type="term" value="F:RNA binding"/>
    <property type="evidence" value="ECO:0007669"/>
    <property type="project" value="UniProtKB-KW"/>
</dbReference>
<dbReference type="GO" id="GO:0004252">
    <property type="term" value="F:serine-type endopeptidase activity"/>
    <property type="evidence" value="ECO:0007669"/>
    <property type="project" value="InterPro"/>
</dbReference>
<dbReference type="GO" id="GO:0070008">
    <property type="term" value="F:serine-type exopeptidase activity"/>
    <property type="evidence" value="ECO:0007669"/>
    <property type="project" value="InterPro"/>
</dbReference>
<dbReference type="GO" id="GO:0006508">
    <property type="term" value="P:proteolysis"/>
    <property type="evidence" value="ECO:0007669"/>
    <property type="project" value="UniProtKB-KW"/>
</dbReference>
<dbReference type="GO" id="GO:0075523">
    <property type="term" value="P:viral translational frameshifting"/>
    <property type="evidence" value="ECO:0007669"/>
    <property type="project" value="UniProtKB-KW"/>
</dbReference>
<dbReference type="Gene3D" id="2.40.10.10">
    <property type="entry name" value="Trypsin-like serine proteases"/>
    <property type="match status" value="2"/>
</dbReference>
<dbReference type="InterPro" id="IPR018019">
    <property type="entry name" value="Luteovirus_Orf2"/>
</dbReference>
<dbReference type="InterPro" id="IPR009003">
    <property type="entry name" value="Peptidase_S1_PA"/>
</dbReference>
<dbReference type="InterPro" id="IPR043504">
    <property type="entry name" value="Peptidase_S1_PA_chymotrypsin"/>
</dbReference>
<dbReference type="InterPro" id="IPR000382">
    <property type="entry name" value="Peptidase_S39B_luteovirus"/>
</dbReference>
<dbReference type="Pfam" id="PF02122">
    <property type="entry name" value="Peptidase_S39"/>
    <property type="match status" value="1"/>
</dbReference>
<dbReference type="PRINTS" id="PR00913">
    <property type="entry name" value="LVIRUSORF2"/>
</dbReference>
<dbReference type="SUPFAM" id="SSF50494">
    <property type="entry name" value="Trypsin-like serine proteases"/>
    <property type="match status" value="1"/>
</dbReference>
<dbReference type="PROSITE" id="PS51868">
    <property type="entry name" value="PEPTIDASE_S39"/>
    <property type="match status" value="1"/>
</dbReference>
<proteinExistence type="inferred from homology"/>
<name>P1_PLRVW</name>
<organismHost>
    <name type="scientific">Solanum tuberosum</name>
    <name type="common">Potato</name>
    <dbReference type="NCBI Taxonomy" id="4113"/>
</organismHost>
<sequence length="639" mass="69677">MNRFTAYAALFFIFSLCSTAKEAGFQHPAFNFRGTSTMSALSGDYSAAPTPLYKSWALPSSLNLTTQPPPLLTDRSYYELVQALISKMRLDCQTVGDMTWRHLSEMLFASWNSVKEVSLKAASVTLWAIISIWFGLYWTLARLITLFLWTFSIEALCLILLGCITSLIYKGALSLSEHLPVFLFMSPLKIIWRAAFSKRNYKNEKAVEGYKGFSVPQKPPKSAVIELQHENGSHLGYANCIRLYSGENALVTAEHCLEGAFATSLKTGNRIPMSTFFPIFKSARNDISILVGPPNWEGLLSVKGAHFITADKIGKGPASFYTLEKGEWMCHSATIDGAHHQFVSVLCNTGPGYSGTGFWSSKNLLGVLKGFPLEEECNYNVMSVIPSIPGITSPNYVFESTAVKGRVFSDETVKELEREASEAVKKLARFKSLTGKNWANDYDSDEDYGLEKEAATNAPAEKTAQTNSAEKTAPSTSAEKTAPTNKPLNGRAAPPAKTNGNSDIPDAAISAPPMDKMVEQIITAMVGRINLSEIEEKIVSRVSQKALQKPKQNKRGRRGGKNKQNNLPPTSTQSISGAPKKKAVPQASGSAGISPATTTPAPKEKPSGGKNSAKFIPSWRIKQQDSAGQKPDLKLNSKA</sequence>
<reference key="1">
    <citation type="journal article" date="1989" name="FEBS Lett.">
        <title>Nucleotide sequence and organization of potato leafroll virus genomic RNA.</title>
        <authorList>
            <person name="van der Wilk F."/>
            <person name="Huisman M.J."/>
            <person name="Cornelissen B.J.C."/>
            <person name="Huttinga H."/>
            <person name="Goldbach R.W."/>
        </authorList>
    </citation>
    <scope>NUCLEOTIDE SEQUENCE [GENOMIC RNA]</scope>
</reference>
<reference key="2">
    <citation type="journal article" date="2008" name="Virus Res.">
        <title>Plantibody-mediated inhibition of the Potato leafroll virus P1 protein reduces virus accumulation.</title>
        <authorList>
            <person name="Nickel H."/>
            <person name="Kawchuk L."/>
            <person name="Twyman R.M."/>
            <person name="Zimmermann S."/>
            <person name="Junghans H."/>
            <person name="Winter S."/>
            <person name="Fischer R."/>
            <person name="Prufer D."/>
        </authorList>
    </citation>
    <scope>FUNCTION</scope>
</reference>
<evidence type="ECO:0000250" key="1"/>
<evidence type="ECO:0000255" key="2"/>
<evidence type="ECO:0000255" key="3">
    <source>
        <dbReference type="PROSITE-ProRule" id="PRU01216"/>
    </source>
</evidence>
<evidence type="ECO:0000256" key="4">
    <source>
        <dbReference type="SAM" id="MobiDB-lite"/>
    </source>
</evidence>
<evidence type="ECO:0000269" key="5">
    <source>
    </source>
</evidence>
<evidence type="ECO:0000305" key="6"/>
<feature type="signal peptide" evidence="2">
    <location>
        <begin position="1"/>
        <end position="20"/>
    </location>
</feature>
<feature type="chain" id="PRO_0000222397" description="Protein P1">
    <location>
        <begin position="21"/>
        <end position="639"/>
    </location>
</feature>
<feature type="chain" id="PRO_0000390901" description="Serine protease" evidence="2">
    <location>
        <begin position="205"/>
        <end position="399"/>
    </location>
</feature>
<feature type="chain" id="PRO_0000390902" description="VPg/P1-C25" evidence="2">
    <location>
        <begin position="400"/>
        <end position="639"/>
    </location>
</feature>
<feature type="transmembrane region" description="Helical" evidence="2">
    <location>
        <begin position="121"/>
        <end position="141"/>
    </location>
</feature>
<feature type="transmembrane region" description="Helical" evidence="2">
    <location>
        <begin position="144"/>
        <end position="164"/>
    </location>
</feature>
<feature type="transmembrane region" description="Helical" evidence="2">
    <location>
        <begin position="172"/>
        <end position="192"/>
    </location>
</feature>
<feature type="domain" description="Peptidase S39" evidence="3">
    <location>
        <begin position="207"/>
        <end position="399"/>
    </location>
</feature>
<feature type="region of interest" description="Disordered" evidence="4">
    <location>
        <begin position="456"/>
        <end position="510"/>
    </location>
</feature>
<feature type="region of interest" description="Disordered" evidence="4">
    <location>
        <begin position="542"/>
        <end position="639"/>
    </location>
</feature>
<feature type="compositionally biased region" description="Polar residues" evidence="4">
    <location>
        <begin position="463"/>
        <end position="487"/>
    </location>
</feature>
<feature type="compositionally biased region" description="Basic residues" evidence="4">
    <location>
        <begin position="551"/>
        <end position="561"/>
    </location>
</feature>
<feature type="compositionally biased region" description="Polar residues" evidence="4">
    <location>
        <begin position="562"/>
        <end position="576"/>
    </location>
</feature>
<feature type="active site" description="For protease activity" evidence="3">
    <location>
        <position position="255"/>
    </location>
</feature>
<feature type="active site" description="For protease activity" evidence="3">
    <location>
        <position position="286"/>
    </location>
</feature>
<feature type="active site" description="For protease activity" evidence="3">
    <location>
        <position position="354"/>
    </location>
</feature>
<feature type="site" description="Cleavage; by viral serine protease" evidence="2">
    <location>
        <begin position="204"/>
        <end position="205"/>
    </location>
</feature>
<feature type="site" description="Cleavage; by viral serine protease" evidence="1">
    <location>
        <begin position="399"/>
        <end position="400"/>
    </location>
</feature>
<organism>
    <name type="scientific">Potato leafroll virus (strain Potato/Netherlands/Wageningen/1989)</name>
    <name type="common">PLrV</name>
    <dbReference type="NCBI Taxonomy" id="12048"/>
    <lineage>
        <taxon>Viruses</taxon>
        <taxon>Riboviria</taxon>
        <taxon>Orthornavirae</taxon>
        <taxon>Pisuviricota</taxon>
        <taxon>Pisoniviricetes</taxon>
        <taxon>Sobelivirales</taxon>
        <taxon>Solemoviridae</taxon>
        <taxon>Polerovirus</taxon>
        <taxon>Potato leafroll virus</taxon>
    </lineage>
</organism>
<gene>
    <name type="ORF">ORF1</name>
</gene>
<keyword id="KW-0378">Hydrolase</keyword>
<keyword id="KW-0472">Membrane</keyword>
<keyword id="KW-0645">Protease</keyword>
<keyword id="KW-0688">Ribosomal frameshifting</keyword>
<keyword id="KW-0694">RNA-binding</keyword>
<keyword id="KW-0720">Serine protease</keyword>
<keyword id="KW-0732">Signal</keyword>
<keyword id="KW-0812">Transmembrane</keyword>
<keyword id="KW-1133">Transmembrane helix</keyword>
<protein>
    <recommendedName>
        <fullName>Protein P1</fullName>
    </recommendedName>
    <alternativeName>
        <fullName>69.7 kDa protein</fullName>
    </alternativeName>
    <alternativeName>
        <fullName>Genome-linked protein precursor</fullName>
    </alternativeName>
    <alternativeName>
        <fullName>Protein ORF1</fullName>
    </alternativeName>
    <component>
        <recommendedName>
            <fullName>Serine protease</fullName>
            <ecNumber>3.4.21.-</ecNumber>
        </recommendedName>
    </component>
    <component>
        <recommendedName>
            <fullName>VPg/P1-C25</fullName>
        </recommendedName>
    </component>
</protein>
<comment type="function">
    <text evidence="5">Precursor from which the VPg molecule is probably released at the onset of the RNA synthesis. Essential for virus replication.</text>
</comment>
<comment type="subcellular location">
    <molecule>Protein P1</molecule>
    <subcellularLocation>
        <location evidence="6">Membrane</location>
        <topology evidence="6">Multi-pass membrane protein</topology>
    </subcellularLocation>
</comment>
<comment type="alternative products">
    <event type="ribosomal frameshifting"/>
    <isoform>
        <id>P11622-1</id>
        <name>Protein P1</name>
        <sequence type="displayed"/>
    </isoform>
    <isoform>
        <id>P11623-1</id>
        <name>RNA-directed RNA polymerase</name>
        <sequence type="external"/>
    </isoform>
</comment>
<comment type="domain">
    <text evidence="1">The C-terminus part of VPg/P1-C25 displays RNA-binding properties.</text>
</comment>
<comment type="PTM">
    <text evidence="1">Specific enzymatic cleavages in vivo yield mature proteins. The protease probably cleaves itself and releases the VPg protein. The VPg protein is probably further cleaved in its C-terminus (By similarity).</text>
</comment>
<comment type="miscellaneous">
    <molecule>Isoform Protein P1</molecule>
    <text>Produced by conventional translation.</text>
</comment>
<comment type="similarity">
    <text evidence="6">Belongs to the peptidase S39B family.</text>
</comment>